<feature type="chain" id="PRO_0000169656" description="Uncharacterized protein YigF">
    <location>
        <begin position="1"/>
        <end position="126"/>
    </location>
</feature>
<name>YIGF_SALTY</name>
<dbReference type="EMBL" id="L11043">
    <property type="protein sequence ID" value="AAA02967.1"/>
    <property type="molecule type" value="Unassigned_DNA"/>
</dbReference>
<dbReference type="EMBL" id="AF233324">
    <property type="protein sequence ID" value="AAF33439.1"/>
    <property type="molecule type" value="Genomic_DNA"/>
</dbReference>
<dbReference type="EMBL" id="AE006468">
    <property type="protein sequence ID" value="AAL22797.1"/>
    <property type="molecule type" value="Genomic_DNA"/>
</dbReference>
<dbReference type="RefSeq" id="NP_462838.1">
    <property type="nucleotide sequence ID" value="NC_003197.2"/>
</dbReference>
<dbReference type="RefSeq" id="WP_000356594.1">
    <property type="nucleotide sequence ID" value="NC_003197.2"/>
</dbReference>
<dbReference type="STRING" id="99287.STM3953"/>
<dbReference type="PaxDb" id="99287-STM3953"/>
<dbReference type="GeneID" id="1255479"/>
<dbReference type="KEGG" id="stm:STM3953"/>
<dbReference type="PATRIC" id="fig|99287.12.peg.4171"/>
<dbReference type="HOGENOM" id="CLU_137392_0_0_6"/>
<dbReference type="OMA" id="ETYGAPN"/>
<dbReference type="PhylomeDB" id="P0A1T8"/>
<dbReference type="BioCyc" id="SENT99287:STM3953-MONOMER"/>
<dbReference type="Proteomes" id="UP000001014">
    <property type="component" value="Chromosome"/>
</dbReference>
<dbReference type="InterPro" id="IPR024399">
    <property type="entry name" value="DUF2628"/>
</dbReference>
<dbReference type="Pfam" id="PF10947">
    <property type="entry name" value="DUF2628"/>
    <property type="match status" value="1"/>
</dbReference>
<reference key="1">
    <citation type="journal article" date="1993" name="J. Biol. Chem.">
        <title>Sequence and topology of the CorA magnesium transport systems of Salmonella typhimurium and Escherichia coli. Identification of a new class of transport protein.</title>
        <authorList>
            <person name="Smith R.L."/>
            <person name="Banks J.L."/>
            <person name="Snavely M.D."/>
            <person name="Maguire M.E."/>
        </authorList>
    </citation>
    <scope>NUCLEOTIDE SEQUENCE [GENOMIC DNA]</scope>
</reference>
<reference key="2">
    <citation type="journal article" date="2001" name="Nature">
        <title>Complete genome sequence of Salmonella enterica serovar Typhimurium LT2.</title>
        <authorList>
            <person name="McClelland M."/>
            <person name="Sanderson K.E."/>
            <person name="Spieth J."/>
            <person name="Clifton S.W."/>
            <person name="Latreille P."/>
            <person name="Courtney L."/>
            <person name="Porwollik S."/>
            <person name="Ali J."/>
            <person name="Dante M."/>
            <person name="Du F."/>
            <person name="Hou S."/>
            <person name="Layman D."/>
            <person name="Leonard S."/>
            <person name="Nguyen C."/>
            <person name="Scott K."/>
            <person name="Holmes A."/>
            <person name="Grewal N."/>
            <person name="Mulvaney E."/>
            <person name="Ryan E."/>
            <person name="Sun H."/>
            <person name="Florea L."/>
            <person name="Miller W."/>
            <person name="Stoneking T."/>
            <person name="Nhan M."/>
            <person name="Waterston R."/>
            <person name="Wilson R.K."/>
        </authorList>
    </citation>
    <scope>NUCLEOTIDE SEQUENCE [LARGE SCALE GENOMIC DNA]</scope>
    <source>
        <strain>LT2 / SGSC1412 / ATCC 700720</strain>
    </source>
</reference>
<organism>
    <name type="scientific">Salmonella typhimurium (strain LT2 / SGSC1412 / ATCC 700720)</name>
    <dbReference type="NCBI Taxonomy" id="99287"/>
    <lineage>
        <taxon>Bacteria</taxon>
        <taxon>Pseudomonadati</taxon>
        <taxon>Pseudomonadota</taxon>
        <taxon>Gammaproteobacteria</taxon>
        <taxon>Enterobacterales</taxon>
        <taxon>Enterobacteriaceae</taxon>
        <taxon>Salmonella</taxon>
    </lineage>
</organism>
<accession>P0A1T8</accession>
<accession>P31139</accession>
<proteinExistence type="predicted"/>
<protein>
    <recommendedName>
        <fullName>Uncharacterized protein YigF</fullName>
    </recommendedName>
</protein>
<keyword id="KW-1185">Reference proteome</keyword>
<sequence>MDKDYINDGSLSEKWKYRFSFYDQHGFPGFWKVSPEYKQAFKALKPRQRLTIQINFIAFFFSWIYLFVLGLWKKAIIVILLGIVAIFIGALIGVNILGLVVAAYVGVNTNKWFYEKEVKGINTWSL</sequence>
<gene>
    <name type="primary">yigF</name>
    <name type="ordered locus">STM3953</name>
    <name type="ORF">STMD1.37</name>
</gene>